<reference key="1">
    <citation type="journal article" date="2001" name="Nature">
        <title>Genome sequence of enterohaemorrhagic Escherichia coli O157:H7.</title>
        <authorList>
            <person name="Perna N.T."/>
            <person name="Plunkett G. III"/>
            <person name="Burland V."/>
            <person name="Mau B."/>
            <person name="Glasner J.D."/>
            <person name="Rose D.J."/>
            <person name="Mayhew G.F."/>
            <person name="Evans P.S."/>
            <person name="Gregor J."/>
            <person name="Kirkpatrick H.A."/>
            <person name="Posfai G."/>
            <person name="Hackett J."/>
            <person name="Klink S."/>
            <person name="Boutin A."/>
            <person name="Shao Y."/>
            <person name="Miller L."/>
            <person name="Grotbeck E.J."/>
            <person name="Davis N.W."/>
            <person name="Lim A."/>
            <person name="Dimalanta E.T."/>
            <person name="Potamousis K."/>
            <person name="Apodaca J."/>
            <person name="Anantharaman T.S."/>
            <person name="Lin J."/>
            <person name="Yen G."/>
            <person name="Schwartz D.C."/>
            <person name="Welch R.A."/>
            <person name="Blattner F.R."/>
        </authorList>
    </citation>
    <scope>NUCLEOTIDE SEQUENCE [LARGE SCALE GENOMIC DNA]</scope>
    <source>
        <strain>O157:H7 / EDL933 / ATCC 700927 / EHEC</strain>
    </source>
</reference>
<reference key="2">
    <citation type="journal article" date="2001" name="DNA Res.">
        <title>Complete genome sequence of enterohemorrhagic Escherichia coli O157:H7 and genomic comparison with a laboratory strain K-12.</title>
        <authorList>
            <person name="Hayashi T."/>
            <person name="Makino K."/>
            <person name="Ohnishi M."/>
            <person name="Kurokawa K."/>
            <person name="Ishii K."/>
            <person name="Yokoyama K."/>
            <person name="Han C.-G."/>
            <person name="Ohtsubo E."/>
            <person name="Nakayama K."/>
            <person name="Murata T."/>
            <person name="Tanaka M."/>
            <person name="Tobe T."/>
            <person name="Iida T."/>
            <person name="Takami H."/>
            <person name="Honda T."/>
            <person name="Sasakawa C."/>
            <person name="Ogasawara N."/>
            <person name="Yasunaga T."/>
            <person name="Kuhara S."/>
            <person name="Shiba T."/>
            <person name="Hattori M."/>
            <person name="Shinagawa H."/>
        </authorList>
    </citation>
    <scope>NUCLEOTIDE SEQUENCE [LARGE SCALE GENOMIC DNA]</scope>
    <source>
        <strain>O157:H7 / Sakai / RIMD 0509952 / EHEC</strain>
    </source>
</reference>
<keyword id="KW-0067">ATP-binding</keyword>
<keyword id="KW-0547">Nucleotide-binding</keyword>
<keyword id="KW-1185">Reference proteome</keyword>
<keyword id="KW-0732">Signal</keyword>
<proteinExistence type="inferred from homology"/>
<protein>
    <recommendedName>
        <fullName>Protein YeeZ</fullName>
    </recommendedName>
</protein>
<feature type="signal peptide" evidence="1">
    <location>
        <begin position="1"/>
        <end position="24"/>
    </location>
</feature>
<feature type="chain" id="PRO_0000042842" description="Protein YeeZ">
    <location>
        <begin position="25"/>
        <end position="274"/>
    </location>
</feature>
<feature type="binding site" evidence="1">
    <location>
        <begin position="170"/>
        <end position="177"/>
    </location>
    <ligand>
        <name>ATP</name>
        <dbReference type="ChEBI" id="CHEBI:30616"/>
    </ligand>
</feature>
<sequence length="274" mass="29680">MKKVAIVGLGWLGMPLAMSLSARGWQVTGSKTTQDGVEAARMSGIDSYLLRMEPELVCDSDDLDALMDADALVITLPARRSGPGDEFYLQAVQELVDSALAHRIPRIIFTSSTSVYGDAQGTVKETTPRNPVTNSGRVLEELEDWLHNLPGTSVDILRLAGLVGPGRHPGRFFAGKTAPDGEHGVNLVHLEDVIGAITLLLQAPKGGHIYNICAPAHPARNVFYPQMARLLGLEPPQFRNSLDSGKGKIIDGSRICNELGFEYQYPDPLVMPLE</sequence>
<gene>
    <name type="primary">yeeZ</name>
    <name type="ordered locus">Z3178</name>
    <name type="ordered locus">ECs2818</name>
</gene>
<accession>P0AD13</accession>
<accession>P76370</accession>
<name>YEEZ_ECO57</name>
<evidence type="ECO:0000255" key="1"/>
<dbReference type="EMBL" id="AE005174">
    <property type="protein sequence ID" value="AAG57075.1"/>
    <property type="molecule type" value="Genomic_DNA"/>
</dbReference>
<dbReference type="EMBL" id="BA000007">
    <property type="protein sequence ID" value="BAB36241.1"/>
    <property type="molecule type" value="Genomic_DNA"/>
</dbReference>
<dbReference type="PIR" id="B90981">
    <property type="entry name" value="B90981"/>
</dbReference>
<dbReference type="RefSeq" id="NP_310845.1">
    <property type="nucleotide sequence ID" value="NC_002695.1"/>
</dbReference>
<dbReference type="RefSeq" id="WP_000754737.1">
    <property type="nucleotide sequence ID" value="NZ_VOAI01000013.1"/>
</dbReference>
<dbReference type="SMR" id="P0AD13"/>
<dbReference type="STRING" id="155864.Z3178"/>
<dbReference type="GeneID" id="914191"/>
<dbReference type="KEGG" id="ece:Z3178"/>
<dbReference type="KEGG" id="ecs:ECs_2818"/>
<dbReference type="PATRIC" id="fig|386585.9.peg.2954"/>
<dbReference type="eggNOG" id="COG0451">
    <property type="taxonomic scope" value="Bacteria"/>
</dbReference>
<dbReference type="HOGENOM" id="CLU_007383_11_1_6"/>
<dbReference type="OMA" id="MVHRDDA"/>
<dbReference type="Proteomes" id="UP000000558">
    <property type="component" value="Chromosome"/>
</dbReference>
<dbReference type="Proteomes" id="UP000002519">
    <property type="component" value="Chromosome"/>
</dbReference>
<dbReference type="GO" id="GO:0005737">
    <property type="term" value="C:cytoplasm"/>
    <property type="evidence" value="ECO:0007669"/>
    <property type="project" value="TreeGrafter"/>
</dbReference>
<dbReference type="GO" id="GO:0004029">
    <property type="term" value="F:aldehyde dehydrogenase (NAD+) activity"/>
    <property type="evidence" value="ECO:0007669"/>
    <property type="project" value="TreeGrafter"/>
</dbReference>
<dbReference type="GO" id="GO:0005524">
    <property type="term" value="F:ATP binding"/>
    <property type="evidence" value="ECO:0007669"/>
    <property type="project" value="UniProtKB-KW"/>
</dbReference>
<dbReference type="CDD" id="cd05266">
    <property type="entry name" value="SDR_a4"/>
    <property type="match status" value="1"/>
</dbReference>
<dbReference type="FunFam" id="3.40.50.720:FF:000130">
    <property type="entry name" value="SDR family NAD(P)-dependent oxidoreductase"/>
    <property type="match status" value="1"/>
</dbReference>
<dbReference type="Gene3D" id="3.40.50.720">
    <property type="entry name" value="NAD(P)-binding Rossmann-like Domain"/>
    <property type="match status" value="1"/>
</dbReference>
<dbReference type="InterPro" id="IPR001509">
    <property type="entry name" value="Epimerase_deHydtase"/>
</dbReference>
<dbReference type="InterPro" id="IPR036291">
    <property type="entry name" value="NAD(P)-bd_dom_sf"/>
</dbReference>
<dbReference type="InterPro" id="IPR051783">
    <property type="entry name" value="NAD(P)-dependent_oxidoreduct"/>
</dbReference>
<dbReference type="PANTHER" id="PTHR48079:SF6">
    <property type="entry name" value="NAD(P)-BINDING DOMAIN-CONTAINING PROTEIN-RELATED"/>
    <property type="match status" value="1"/>
</dbReference>
<dbReference type="PANTHER" id="PTHR48079">
    <property type="entry name" value="PROTEIN YEEZ"/>
    <property type="match status" value="1"/>
</dbReference>
<dbReference type="Pfam" id="PF01370">
    <property type="entry name" value="Epimerase"/>
    <property type="match status" value="1"/>
</dbReference>
<dbReference type="SUPFAM" id="SSF51735">
    <property type="entry name" value="NAD(P)-binding Rossmann-fold domains"/>
    <property type="match status" value="1"/>
</dbReference>
<organism>
    <name type="scientific">Escherichia coli O157:H7</name>
    <dbReference type="NCBI Taxonomy" id="83334"/>
    <lineage>
        <taxon>Bacteria</taxon>
        <taxon>Pseudomonadati</taxon>
        <taxon>Pseudomonadota</taxon>
        <taxon>Gammaproteobacteria</taxon>
        <taxon>Enterobacterales</taxon>
        <taxon>Enterobacteriaceae</taxon>
        <taxon>Escherichia</taxon>
    </lineage>
</organism>